<name>HTPG_HELPJ</name>
<reference key="1">
    <citation type="journal article" date="1999" name="Nature">
        <title>Genomic sequence comparison of two unrelated isolates of the human gastric pathogen Helicobacter pylori.</title>
        <authorList>
            <person name="Alm R.A."/>
            <person name="Ling L.-S.L."/>
            <person name="Moir D.T."/>
            <person name="King B.L."/>
            <person name="Brown E.D."/>
            <person name="Doig P.C."/>
            <person name="Smith D.R."/>
            <person name="Noonan B."/>
            <person name="Guild B.C."/>
            <person name="deJonge B.L."/>
            <person name="Carmel G."/>
            <person name="Tummino P.J."/>
            <person name="Caruso A."/>
            <person name="Uria-Nickelsen M."/>
            <person name="Mills D.M."/>
            <person name="Ives C."/>
            <person name="Gibson R."/>
            <person name="Merberg D."/>
            <person name="Mills S.D."/>
            <person name="Jiang Q."/>
            <person name="Taylor D.E."/>
            <person name="Vovis G.F."/>
            <person name="Trust T.J."/>
        </authorList>
    </citation>
    <scope>NUCLEOTIDE SEQUENCE [LARGE SCALE GENOMIC DNA]</scope>
    <source>
        <strain>J99 / ATCC 700824</strain>
    </source>
</reference>
<comment type="function">
    <text evidence="1">Molecular chaperone. Has ATPase activity.</text>
</comment>
<comment type="subunit">
    <text evidence="1">Homodimer.</text>
</comment>
<comment type="subcellular location">
    <subcellularLocation>
        <location evidence="1">Cytoplasm</location>
    </subcellularLocation>
</comment>
<comment type="similarity">
    <text evidence="1">Belongs to the heat shock protein 90 family.</text>
</comment>
<proteinExistence type="inferred from homology"/>
<gene>
    <name evidence="1" type="primary">htpG</name>
    <name type="ordered locus">jhp_0196</name>
</gene>
<feature type="chain" id="PRO_0000062993" description="Chaperone protein HtpG">
    <location>
        <begin position="1"/>
        <end position="621"/>
    </location>
</feature>
<feature type="region of interest" description="A; substrate-binding" evidence="1">
    <location>
        <begin position="1"/>
        <end position="341"/>
    </location>
</feature>
<feature type="region of interest" description="B" evidence="1">
    <location>
        <begin position="342"/>
        <end position="547"/>
    </location>
</feature>
<feature type="region of interest" description="C" evidence="1">
    <location>
        <begin position="548"/>
        <end position="621"/>
    </location>
</feature>
<sequence length="621" mass="71140">MSNQEYTFQTEINQLLDLMIHSLYSNKEIFLRELISNASDALDKLNYLMLTDEKLKGLNTTPSIHLSFDSQKKTLTIKDNGIGMDKSDLIEHLGTIAKSGTKSFLSALSGDKKKDSALIGQFGVGFYSAFMVASKIVVQTKKVTSHQAYAWVSDGKGKFEISECVKEEQGTEITLFLKEEDSHFASRWEIDSVVKKYSEHIPFPIFLTYTDTKFEGEGDNKKEVKEEKCDQINQASALWKMNKSELKEKDYKDFYQSFAHDNSEPLSYIHNKVEGSLEYTTLFYIPSKAPFDLFRVDYKSGVKLYVKRVFITDDDKELLPSYLRFVKGVIDSEDLPLNVSREILQQNKILANIRSASVKKILSEIERLSKDNKNYHKFYEPFGKVLKEGLYGDFENKEKLLELLRFYSKDKGEWISLKEYKENLKENQKSIYYLLGENLDLLKASPLLEKYAQKGYDVLLLSDEIDAFVMPGVNEYDKTPFRDASHSESLKELGLAEIHDEVKDQFKDLIKAFEENLKDEIKGVELSGHLTSAVALIGDEPNAMMANWMRQMGQSVPESKKTLELNPNHAILQKLLKCEDKEQLSAFIWLLYDGAKLLEKGALKDAKSFNERLNSVLLKAL</sequence>
<dbReference type="EMBL" id="AE001439">
    <property type="protein sequence ID" value="AAD05780.1"/>
    <property type="molecule type" value="Genomic_DNA"/>
</dbReference>
<dbReference type="PIR" id="A71961">
    <property type="entry name" value="A71961"/>
</dbReference>
<dbReference type="RefSeq" id="WP_000070591.1">
    <property type="nucleotide sequence ID" value="NC_000921.1"/>
</dbReference>
<dbReference type="SMR" id="Q9ZMM2"/>
<dbReference type="KEGG" id="hpj:jhp_0196"/>
<dbReference type="PATRIC" id="fig|85963.30.peg.824"/>
<dbReference type="eggNOG" id="COG0326">
    <property type="taxonomic scope" value="Bacteria"/>
</dbReference>
<dbReference type="Proteomes" id="UP000000804">
    <property type="component" value="Chromosome"/>
</dbReference>
<dbReference type="GO" id="GO:0005737">
    <property type="term" value="C:cytoplasm"/>
    <property type="evidence" value="ECO:0007669"/>
    <property type="project" value="UniProtKB-SubCell"/>
</dbReference>
<dbReference type="GO" id="GO:0005524">
    <property type="term" value="F:ATP binding"/>
    <property type="evidence" value="ECO:0007669"/>
    <property type="project" value="UniProtKB-UniRule"/>
</dbReference>
<dbReference type="GO" id="GO:0016887">
    <property type="term" value="F:ATP hydrolysis activity"/>
    <property type="evidence" value="ECO:0007669"/>
    <property type="project" value="InterPro"/>
</dbReference>
<dbReference type="GO" id="GO:0140662">
    <property type="term" value="F:ATP-dependent protein folding chaperone"/>
    <property type="evidence" value="ECO:0007669"/>
    <property type="project" value="InterPro"/>
</dbReference>
<dbReference type="GO" id="GO:0051082">
    <property type="term" value="F:unfolded protein binding"/>
    <property type="evidence" value="ECO:0007669"/>
    <property type="project" value="UniProtKB-UniRule"/>
</dbReference>
<dbReference type="CDD" id="cd16927">
    <property type="entry name" value="HATPase_Hsp90-like"/>
    <property type="match status" value="1"/>
</dbReference>
<dbReference type="FunFam" id="1.20.120.790:FF:000016">
    <property type="entry name" value="Chaperone protein HtpG"/>
    <property type="match status" value="1"/>
</dbReference>
<dbReference type="FunFam" id="3.30.230.80:FF:000002">
    <property type="entry name" value="Molecular chaperone HtpG"/>
    <property type="match status" value="1"/>
</dbReference>
<dbReference type="FunFam" id="3.30.565.10:FF:000009">
    <property type="entry name" value="Molecular chaperone HtpG"/>
    <property type="match status" value="1"/>
</dbReference>
<dbReference type="Gene3D" id="3.30.230.80">
    <property type="match status" value="1"/>
</dbReference>
<dbReference type="Gene3D" id="3.40.50.11260">
    <property type="match status" value="1"/>
</dbReference>
<dbReference type="Gene3D" id="1.20.120.790">
    <property type="entry name" value="Heat shock protein 90, C-terminal domain"/>
    <property type="match status" value="1"/>
</dbReference>
<dbReference type="Gene3D" id="3.30.565.10">
    <property type="entry name" value="Histidine kinase-like ATPase, C-terminal domain"/>
    <property type="match status" value="1"/>
</dbReference>
<dbReference type="HAMAP" id="MF_00505">
    <property type="entry name" value="HSP90"/>
    <property type="match status" value="1"/>
</dbReference>
<dbReference type="InterPro" id="IPR036890">
    <property type="entry name" value="HATPase_C_sf"/>
</dbReference>
<dbReference type="InterPro" id="IPR019805">
    <property type="entry name" value="Heat_shock_protein_90_CS"/>
</dbReference>
<dbReference type="InterPro" id="IPR037196">
    <property type="entry name" value="HSP90_C"/>
</dbReference>
<dbReference type="InterPro" id="IPR001404">
    <property type="entry name" value="Hsp90_fam"/>
</dbReference>
<dbReference type="InterPro" id="IPR020575">
    <property type="entry name" value="Hsp90_N"/>
</dbReference>
<dbReference type="InterPro" id="IPR020568">
    <property type="entry name" value="Ribosomal_Su5_D2-typ_SF"/>
</dbReference>
<dbReference type="NCBIfam" id="NF003555">
    <property type="entry name" value="PRK05218.1"/>
    <property type="match status" value="1"/>
</dbReference>
<dbReference type="PANTHER" id="PTHR11528">
    <property type="entry name" value="HEAT SHOCK PROTEIN 90 FAMILY MEMBER"/>
    <property type="match status" value="1"/>
</dbReference>
<dbReference type="Pfam" id="PF13589">
    <property type="entry name" value="HATPase_c_3"/>
    <property type="match status" value="1"/>
</dbReference>
<dbReference type="Pfam" id="PF00183">
    <property type="entry name" value="HSP90"/>
    <property type="match status" value="1"/>
</dbReference>
<dbReference type="PIRSF" id="PIRSF002583">
    <property type="entry name" value="Hsp90"/>
    <property type="match status" value="1"/>
</dbReference>
<dbReference type="PRINTS" id="PR00775">
    <property type="entry name" value="HEATSHOCK90"/>
</dbReference>
<dbReference type="SMART" id="SM00387">
    <property type="entry name" value="HATPase_c"/>
    <property type="match status" value="1"/>
</dbReference>
<dbReference type="SUPFAM" id="SSF55874">
    <property type="entry name" value="ATPase domain of HSP90 chaperone/DNA topoisomerase II/histidine kinase"/>
    <property type="match status" value="1"/>
</dbReference>
<dbReference type="SUPFAM" id="SSF110942">
    <property type="entry name" value="HSP90 C-terminal domain"/>
    <property type="match status" value="1"/>
</dbReference>
<dbReference type="SUPFAM" id="SSF54211">
    <property type="entry name" value="Ribosomal protein S5 domain 2-like"/>
    <property type="match status" value="1"/>
</dbReference>
<dbReference type="PROSITE" id="PS00298">
    <property type="entry name" value="HSP90"/>
    <property type="match status" value="1"/>
</dbReference>
<evidence type="ECO:0000255" key="1">
    <source>
        <dbReference type="HAMAP-Rule" id="MF_00505"/>
    </source>
</evidence>
<accession>Q9ZMM2</accession>
<organism>
    <name type="scientific">Helicobacter pylori (strain J99 / ATCC 700824)</name>
    <name type="common">Campylobacter pylori J99</name>
    <dbReference type="NCBI Taxonomy" id="85963"/>
    <lineage>
        <taxon>Bacteria</taxon>
        <taxon>Pseudomonadati</taxon>
        <taxon>Campylobacterota</taxon>
        <taxon>Epsilonproteobacteria</taxon>
        <taxon>Campylobacterales</taxon>
        <taxon>Helicobacteraceae</taxon>
        <taxon>Helicobacter</taxon>
    </lineage>
</organism>
<keyword id="KW-0067">ATP-binding</keyword>
<keyword id="KW-0143">Chaperone</keyword>
<keyword id="KW-0963">Cytoplasm</keyword>
<keyword id="KW-0547">Nucleotide-binding</keyword>
<keyword id="KW-0346">Stress response</keyword>
<protein>
    <recommendedName>
        <fullName evidence="1">Chaperone protein HtpG</fullName>
    </recommendedName>
    <alternativeName>
        <fullName evidence="1">Heat shock protein HtpG</fullName>
    </alternativeName>
    <alternativeName>
        <fullName evidence="1">High temperature protein G</fullName>
    </alternativeName>
</protein>